<protein>
    <recommendedName>
        <fullName evidence="2">Conophan vil-I'/vil-I'(O2P)</fullName>
    </recommendedName>
</protein>
<evidence type="ECO:0000269" key="1">
    <source>
    </source>
</evidence>
<evidence type="ECO:0000303" key="2">
    <source>
    </source>
</evidence>
<evidence type="ECO:0000305" key="3"/>
<dbReference type="GO" id="GO:0005576">
    <property type="term" value="C:extracellular region"/>
    <property type="evidence" value="ECO:0007669"/>
    <property type="project" value="UniProtKB-SubCell"/>
</dbReference>
<dbReference type="GO" id="GO:0090729">
    <property type="term" value="F:toxin activity"/>
    <property type="evidence" value="ECO:0007669"/>
    <property type="project" value="UniProtKB-KW"/>
</dbReference>
<accession>P85015</accession>
<organism>
    <name type="scientific">Conus villepinii</name>
    <name type="common">Villepin's cone</name>
    <dbReference type="NCBI Taxonomy" id="257347"/>
    <lineage>
        <taxon>Eukaryota</taxon>
        <taxon>Metazoa</taxon>
        <taxon>Spiralia</taxon>
        <taxon>Lophotrochozoa</taxon>
        <taxon>Mollusca</taxon>
        <taxon>Gastropoda</taxon>
        <taxon>Caenogastropoda</taxon>
        <taxon>Neogastropoda</taxon>
        <taxon>Conoidea</taxon>
        <taxon>Conidae</taxon>
        <taxon>Conus</taxon>
        <taxon>Dauciconus</taxon>
    </lineage>
</organism>
<keyword id="KW-0208">D-amino acid</keyword>
<keyword id="KW-0903">Direct protein sequencing</keyword>
<keyword id="KW-0379">Hydroxylation</keyword>
<keyword id="KW-0528">Neurotoxin</keyword>
<keyword id="KW-0964">Secreted</keyword>
<keyword id="KW-0800">Toxin</keyword>
<feature type="peptide" id="PRO_0000259383" description="Conophan vil-I'/vil-I'(O2P)" evidence="1">
    <location>
        <begin position="1"/>
        <end position="7"/>
    </location>
</feature>
<feature type="modified residue" description="4-hydroxyproline; in form vil-I'" evidence="1">
    <location>
        <position position="2"/>
    </location>
</feature>
<feature type="modified residue" description="D-allo-isoleucine" evidence="1">
    <location>
        <position position="5"/>
    </location>
</feature>
<sequence>EPNSIWS</sequence>
<proteinExistence type="evidence at protein level"/>
<name>CONOI_CONVL</name>
<comment type="function">
    <text>May act as a neurotoxin.</text>
</comment>
<comment type="subcellular location">
    <subcellularLocation>
        <location evidence="1">Secreted</location>
    </subcellularLocation>
</comment>
<comment type="tissue specificity">
    <text evidence="1">Expressed by the venom duct.</text>
</comment>
<comment type="PTM">
    <text evidence="1">Occurs in 2 forms, vil-I' contains 4-hydroxyproline at Pro-2, vil-I'(O2P) contains unmodified proline at Pro-2.</text>
</comment>
<comment type="miscellaneous">
    <text evidence="3">The mature peptide does not contain cysteine residue.</text>
</comment>
<comment type="similarity">
    <text evidence="3">Belongs to the conophan family.</text>
</comment>
<reference key="1">
    <citation type="journal article" date="2006" name="Prog. Mol. Subcell. Biol.">
        <title>Hyperhydroxylation: a new strategy for neuronal targeting by venomous marine molluscs.</title>
        <authorList>
            <person name="Franco A."/>
            <person name="Pisarewicz K."/>
            <person name="Moller C."/>
            <person name="Mora D."/>
            <person name="Fields G.B."/>
            <person name="Mari F."/>
        </authorList>
    </citation>
    <scope>PROTEIN SEQUENCE</scope>
    <scope>SUBCELLULAR LOCATION</scope>
    <scope>TISSUE SPECIFICITY</scope>
    <scope>HYDROXYLATION AT PRO-2</scope>
    <scope>D-AMINO ACID AT ILE-5</scope>
    <source>
        <tissue>Venom</tissue>
    </source>
</reference>